<gene>
    <name evidence="1" type="primary">fucI</name>
    <name type="ordered locus">SPAB_03704</name>
</gene>
<proteinExistence type="inferred from homology"/>
<name>FUCI_SALPB</name>
<dbReference type="EC" id="5.3.1.25" evidence="1"/>
<dbReference type="EMBL" id="CP000886">
    <property type="protein sequence ID" value="ABX69042.1"/>
    <property type="molecule type" value="Genomic_DNA"/>
</dbReference>
<dbReference type="RefSeq" id="WP_000724134.1">
    <property type="nucleotide sequence ID" value="NC_010102.1"/>
</dbReference>
<dbReference type="SMR" id="A9N2J1"/>
<dbReference type="KEGG" id="spq:SPAB_03704"/>
<dbReference type="PATRIC" id="fig|1016998.12.peg.3488"/>
<dbReference type="HOGENOM" id="CLU_033326_1_0_6"/>
<dbReference type="BioCyc" id="SENT1016998:SPAB_RS15075-MONOMER"/>
<dbReference type="UniPathway" id="UPA00563">
    <property type="reaction ID" value="UER00624"/>
</dbReference>
<dbReference type="Proteomes" id="UP000008556">
    <property type="component" value="Chromosome"/>
</dbReference>
<dbReference type="GO" id="GO:0005737">
    <property type="term" value="C:cytoplasm"/>
    <property type="evidence" value="ECO:0007669"/>
    <property type="project" value="UniProtKB-SubCell"/>
</dbReference>
<dbReference type="GO" id="GO:0008790">
    <property type="term" value="F:arabinose isomerase activity"/>
    <property type="evidence" value="ECO:0007669"/>
    <property type="project" value="TreeGrafter"/>
</dbReference>
<dbReference type="GO" id="GO:0008736">
    <property type="term" value="F:L-fucose isomerase activity"/>
    <property type="evidence" value="ECO:0007669"/>
    <property type="project" value="UniProtKB-UniRule"/>
</dbReference>
<dbReference type="GO" id="GO:0030145">
    <property type="term" value="F:manganese ion binding"/>
    <property type="evidence" value="ECO:0007669"/>
    <property type="project" value="UniProtKB-UniRule"/>
</dbReference>
<dbReference type="GO" id="GO:0019571">
    <property type="term" value="P:D-arabinose catabolic process"/>
    <property type="evidence" value="ECO:0007669"/>
    <property type="project" value="TreeGrafter"/>
</dbReference>
<dbReference type="GO" id="GO:0042355">
    <property type="term" value="P:L-fucose catabolic process"/>
    <property type="evidence" value="ECO:0007669"/>
    <property type="project" value="UniProtKB-UniRule"/>
</dbReference>
<dbReference type="FunFam" id="3.20.14.10:FF:000001">
    <property type="entry name" value="L-fucose isomerase"/>
    <property type="match status" value="1"/>
</dbReference>
<dbReference type="FunFam" id="3.40.275.10:FF:000001">
    <property type="entry name" value="L-fucose isomerase"/>
    <property type="match status" value="1"/>
</dbReference>
<dbReference type="FunFam" id="3.40.50.1070:FF:000001">
    <property type="entry name" value="L-fucose isomerase"/>
    <property type="match status" value="1"/>
</dbReference>
<dbReference type="Gene3D" id="3.40.50.1070">
    <property type="match status" value="1"/>
</dbReference>
<dbReference type="Gene3D" id="3.40.275.10">
    <property type="entry name" value="L-fucose Isomerase, Chain A, domain 2"/>
    <property type="match status" value="1"/>
</dbReference>
<dbReference type="Gene3D" id="3.20.14.10">
    <property type="entry name" value="L-fucose/L-arabinose isomerase, C-terminal"/>
    <property type="match status" value="1"/>
</dbReference>
<dbReference type="HAMAP" id="MF_01254">
    <property type="entry name" value="Fucose_iso"/>
    <property type="match status" value="1"/>
</dbReference>
<dbReference type="InterPro" id="IPR004216">
    <property type="entry name" value="Fuc/Ara_isomerase_C"/>
</dbReference>
<dbReference type="InterPro" id="IPR038393">
    <property type="entry name" value="Fuc_iso_dom3_sf"/>
</dbReference>
<dbReference type="InterPro" id="IPR015888">
    <property type="entry name" value="Fuc_isomerase_C"/>
</dbReference>
<dbReference type="InterPro" id="IPR038391">
    <property type="entry name" value="Fucose_iso_dom1_sf"/>
</dbReference>
<dbReference type="InterPro" id="IPR012888">
    <property type="entry name" value="Fucose_iso_N1"/>
</dbReference>
<dbReference type="InterPro" id="IPR005763">
    <property type="entry name" value="Fucose_isomerase"/>
</dbReference>
<dbReference type="InterPro" id="IPR038392">
    <property type="entry name" value="Fucose_isomerase_dom2_sf"/>
</dbReference>
<dbReference type="InterPro" id="IPR009015">
    <property type="entry name" value="Fucose_isomerase_N/cen_sf"/>
</dbReference>
<dbReference type="InterPro" id="IPR012889">
    <property type="entry name" value="Fucose_isomerase_N2"/>
</dbReference>
<dbReference type="NCBIfam" id="TIGR01089">
    <property type="entry name" value="fucI"/>
    <property type="match status" value="1"/>
</dbReference>
<dbReference type="NCBIfam" id="NF008220">
    <property type="entry name" value="PRK10991.1"/>
    <property type="match status" value="1"/>
</dbReference>
<dbReference type="PANTHER" id="PTHR37840">
    <property type="entry name" value="L-FUCOSE ISOMERASE"/>
    <property type="match status" value="1"/>
</dbReference>
<dbReference type="PANTHER" id="PTHR37840:SF1">
    <property type="entry name" value="L-FUCOSE ISOMERASE"/>
    <property type="match status" value="1"/>
</dbReference>
<dbReference type="Pfam" id="PF02952">
    <property type="entry name" value="Fucose_iso_C"/>
    <property type="match status" value="1"/>
</dbReference>
<dbReference type="Pfam" id="PF07881">
    <property type="entry name" value="Fucose_iso_N1"/>
    <property type="match status" value="1"/>
</dbReference>
<dbReference type="Pfam" id="PF07882">
    <property type="entry name" value="Fucose_iso_N2"/>
    <property type="match status" value="1"/>
</dbReference>
<dbReference type="SUPFAM" id="SSF50443">
    <property type="entry name" value="FucI/AraA C-terminal domain-like"/>
    <property type="match status" value="1"/>
</dbReference>
<dbReference type="SUPFAM" id="SSF53743">
    <property type="entry name" value="FucI/AraA N-terminal and middle domains"/>
    <property type="match status" value="1"/>
</dbReference>
<evidence type="ECO:0000255" key="1">
    <source>
        <dbReference type="HAMAP-Rule" id="MF_01254"/>
    </source>
</evidence>
<sequence>MKKISLPKIGIRPVIDGRRMGVRESLEEQTMNMAKATAALITEKMRHACGAQVECVIADTCIAGMAESAACEEKFSSQNVGVTITVTPCWCYGSETIDMDPMRPKAIWGFNGTERPGAVYLAAALAAHSQKGIPAFSIYGHDVQDADDTSIPADVEEKLLRFARAGLAVASMKGKSYLSVGGVSMGIAGSIVDHNFFESWLGMKVQAVDMTELRRRIDQKIYDEAELEMALAWADKNFRYGEDQNASQYKRNEAQNRAVLKESLLMAMCIRDMMQGNKTLADKGLVEESLGYNAIAAGFQGQRHWTDQYPNGDTAEALLNSSFDWNGVREPFVVATENDSLNGVAMLFGHQLTGTAQIFADVRTYWSPEAVERVTGQALSGLAEHGIIHLINSGSAALDGACKQRDSEGKPTMKPHWEISQQEADACLAATEWCPAIHEYFRGGGYSSRFLTEGGVPFTMTRVNIIKGLGPVLQIAEGWSVELPKAMHDQLDARTNSTWPTTWFAPRLTGKGPFTDVYSVMANWGANHGVLTIGHVGADFITLAAMLRIPVCMHNVEEAKIYRPSAWAAHGMDIEGQDYRACQNYGPLYKR</sequence>
<protein>
    <recommendedName>
        <fullName evidence="1">L-fucose isomerase</fullName>
        <ecNumber evidence="1">5.3.1.25</ecNumber>
    </recommendedName>
    <alternativeName>
        <fullName evidence="1">6-deoxy-L-galactose isomerase</fullName>
    </alternativeName>
    <alternativeName>
        <fullName>FucIase</fullName>
    </alternativeName>
</protein>
<feature type="chain" id="PRO_1000085805" description="L-fucose isomerase">
    <location>
        <begin position="1"/>
        <end position="591"/>
    </location>
</feature>
<feature type="active site" description="Proton acceptor" evidence="1">
    <location>
        <position position="337"/>
    </location>
</feature>
<feature type="active site" description="Proton acceptor" evidence="1">
    <location>
        <position position="361"/>
    </location>
</feature>
<feature type="binding site" evidence="1">
    <location>
        <position position="337"/>
    </location>
    <ligand>
        <name>Mn(2+)</name>
        <dbReference type="ChEBI" id="CHEBI:29035"/>
    </ligand>
</feature>
<feature type="binding site" evidence="1">
    <location>
        <position position="361"/>
    </location>
    <ligand>
        <name>Mn(2+)</name>
        <dbReference type="ChEBI" id="CHEBI:29035"/>
    </ligand>
</feature>
<feature type="binding site" evidence="1">
    <location>
        <position position="528"/>
    </location>
    <ligand>
        <name>Mn(2+)</name>
        <dbReference type="ChEBI" id="CHEBI:29035"/>
    </ligand>
</feature>
<keyword id="KW-0119">Carbohydrate metabolism</keyword>
<keyword id="KW-0963">Cytoplasm</keyword>
<keyword id="KW-0294">Fucose metabolism</keyword>
<keyword id="KW-0413">Isomerase</keyword>
<keyword id="KW-0464">Manganese</keyword>
<keyword id="KW-0479">Metal-binding</keyword>
<comment type="function">
    <text evidence="1">Converts the aldose L-fucose into the corresponding ketose L-fuculose.</text>
</comment>
<comment type="catalytic activity">
    <reaction evidence="1">
        <text>L-fucose = L-fuculose</text>
        <dbReference type="Rhea" id="RHEA:17233"/>
        <dbReference type="ChEBI" id="CHEBI:2181"/>
        <dbReference type="ChEBI" id="CHEBI:17617"/>
        <dbReference type="EC" id="5.3.1.25"/>
    </reaction>
</comment>
<comment type="cofactor">
    <cofactor evidence="1">
        <name>Mn(2+)</name>
        <dbReference type="ChEBI" id="CHEBI:29035"/>
    </cofactor>
</comment>
<comment type="pathway">
    <text evidence="1">Carbohydrate degradation; L-fucose degradation; L-lactaldehyde and glycerone phosphate from L-fucose: step 1/3.</text>
</comment>
<comment type="subunit">
    <text evidence="1">Homohexamer.</text>
</comment>
<comment type="subcellular location">
    <subcellularLocation>
        <location evidence="1">Cytoplasm</location>
    </subcellularLocation>
</comment>
<comment type="similarity">
    <text evidence="1">Belongs to the L-fucose isomerase family.</text>
</comment>
<organism>
    <name type="scientific">Salmonella paratyphi B (strain ATCC BAA-1250 / SPB7)</name>
    <dbReference type="NCBI Taxonomy" id="1016998"/>
    <lineage>
        <taxon>Bacteria</taxon>
        <taxon>Pseudomonadati</taxon>
        <taxon>Pseudomonadota</taxon>
        <taxon>Gammaproteobacteria</taxon>
        <taxon>Enterobacterales</taxon>
        <taxon>Enterobacteriaceae</taxon>
        <taxon>Salmonella</taxon>
    </lineage>
</organism>
<reference key="1">
    <citation type="submission" date="2007-11" db="EMBL/GenBank/DDBJ databases">
        <authorList>
            <consortium name="The Salmonella enterica serovar Paratyphi B Genome Sequencing Project"/>
            <person name="McClelland M."/>
            <person name="Sanderson E.K."/>
            <person name="Porwollik S."/>
            <person name="Spieth J."/>
            <person name="Clifton W.S."/>
            <person name="Fulton R."/>
            <person name="Cordes M."/>
            <person name="Wollam A."/>
            <person name="Shah N."/>
            <person name="Pepin K."/>
            <person name="Bhonagiri V."/>
            <person name="Nash W."/>
            <person name="Johnson M."/>
            <person name="Thiruvilangam P."/>
            <person name="Wilson R."/>
        </authorList>
    </citation>
    <scope>NUCLEOTIDE SEQUENCE [LARGE SCALE GENOMIC DNA]</scope>
    <source>
        <strain>ATCC BAA-1250 / SPB7</strain>
    </source>
</reference>
<accession>A9N2J1</accession>